<proteinExistence type="inferred from homology"/>
<feature type="chain" id="PRO_1000147463" description="Putative pre-16S rRNA nuclease">
    <location>
        <begin position="1"/>
        <end position="151"/>
    </location>
</feature>
<name>YQGF_BIFLS</name>
<reference key="1">
    <citation type="journal article" date="2008" name="Proc. Natl. Acad. Sci. U.S.A.">
        <title>The genome sequence of Bifidobacterium longum subsp. infantis reveals adaptations for milk utilization within the infant microbiome.</title>
        <authorList>
            <person name="Sela D.A."/>
            <person name="Chapman J."/>
            <person name="Adeuya A."/>
            <person name="Kim J.H."/>
            <person name="Chen F."/>
            <person name="Whitehead T.R."/>
            <person name="Lapidus A."/>
            <person name="Rokhsar D.S."/>
            <person name="Lebrilla C.B."/>
            <person name="German J.B."/>
            <person name="Price N.P."/>
            <person name="Richardson P.M."/>
            <person name="Mills D.A."/>
        </authorList>
    </citation>
    <scope>NUCLEOTIDE SEQUENCE [LARGE SCALE GENOMIC DNA]</scope>
    <source>
        <strain>ATCC 15697 / DSM 20088 / JCM 1222 / NCTC 11817 / S12</strain>
    </source>
</reference>
<reference key="2">
    <citation type="journal article" date="2011" name="Nature">
        <title>Bifidobacteria can protect from enteropathogenic infection through production of acetate.</title>
        <authorList>
            <person name="Fukuda S."/>
            <person name="Toh H."/>
            <person name="Hase K."/>
            <person name="Oshima K."/>
            <person name="Nakanishi Y."/>
            <person name="Yoshimura K."/>
            <person name="Tobe T."/>
            <person name="Clarke J.M."/>
            <person name="Topping D.L."/>
            <person name="Suzuki T."/>
            <person name="Taylor T.D."/>
            <person name="Itoh K."/>
            <person name="Kikuchi J."/>
            <person name="Morita H."/>
            <person name="Hattori M."/>
            <person name="Ohno H."/>
        </authorList>
    </citation>
    <scope>NUCLEOTIDE SEQUENCE [LARGE SCALE GENOMIC DNA]</scope>
    <source>
        <strain>ATCC 15697 / DSM 20088 / JCM 1222 / NCTC 11817 / S12</strain>
    </source>
</reference>
<keyword id="KW-0963">Cytoplasm</keyword>
<keyword id="KW-0378">Hydrolase</keyword>
<keyword id="KW-0540">Nuclease</keyword>
<keyword id="KW-0690">Ribosome biogenesis</keyword>
<gene>
    <name type="ordered locus">Blon_1601</name>
    <name type="ordered locus">BLIJ_1656</name>
</gene>
<dbReference type="EC" id="3.1.-.-" evidence="1"/>
<dbReference type="EMBL" id="CP001095">
    <property type="protein sequence ID" value="ACJ52680.1"/>
    <property type="molecule type" value="Genomic_DNA"/>
</dbReference>
<dbReference type="EMBL" id="AP010889">
    <property type="protein sequence ID" value="BAJ69238.1"/>
    <property type="status" value="ALT_INIT"/>
    <property type="molecule type" value="Genomic_DNA"/>
</dbReference>
<dbReference type="SMR" id="B7GSA0"/>
<dbReference type="KEGG" id="bln:Blon_1601"/>
<dbReference type="KEGG" id="blon:BLIJ_1656"/>
<dbReference type="PATRIC" id="fig|391904.8.peg.1670"/>
<dbReference type="HOGENOM" id="CLU_098240_0_0_11"/>
<dbReference type="Proteomes" id="UP000001360">
    <property type="component" value="Chromosome"/>
</dbReference>
<dbReference type="GO" id="GO:0005829">
    <property type="term" value="C:cytosol"/>
    <property type="evidence" value="ECO:0007669"/>
    <property type="project" value="TreeGrafter"/>
</dbReference>
<dbReference type="GO" id="GO:0004518">
    <property type="term" value="F:nuclease activity"/>
    <property type="evidence" value="ECO:0007669"/>
    <property type="project" value="UniProtKB-KW"/>
</dbReference>
<dbReference type="GO" id="GO:0000967">
    <property type="term" value="P:rRNA 5'-end processing"/>
    <property type="evidence" value="ECO:0007669"/>
    <property type="project" value="UniProtKB-UniRule"/>
</dbReference>
<dbReference type="CDD" id="cd16964">
    <property type="entry name" value="YqgF"/>
    <property type="match status" value="1"/>
</dbReference>
<dbReference type="Gene3D" id="3.30.420.140">
    <property type="entry name" value="YqgF/RNase H-like domain"/>
    <property type="match status" value="1"/>
</dbReference>
<dbReference type="HAMAP" id="MF_00651">
    <property type="entry name" value="Nuclease_YqgF"/>
    <property type="match status" value="1"/>
</dbReference>
<dbReference type="InterPro" id="IPR012337">
    <property type="entry name" value="RNaseH-like_sf"/>
</dbReference>
<dbReference type="InterPro" id="IPR005227">
    <property type="entry name" value="YqgF"/>
</dbReference>
<dbReference type="InterPro" id="IPR006641">
    <property type="entry name" value="YqgF/RNaseH-like_dom"/>
</dbReference>
<dbReference type="InterPro" id="IPR037027">
    <property type="entry name" value="YqgF/RNaseH-like_dom_sf"/>
</dbReference>
<dbReference type="NCBIfam" id="TIGR00250">
    <property type="entry name" value="RNAse_H_YqgF"/>
    <property type="match status" value="1"/>
</dbReference>
<dbReference type="PANTHER" id="PTHR33317">
    <property type="entry name" value="POLYNUCLEOTIDYL TRANSFERASE, RIBONUCLEASE H-LIKE SUPERFAMILY PROTEIN"/>
    <property type="match status" value="1"/>
</dbReference>
<dbReference type="PANTHER" id="PTHR33317:SF4">
    <property type="entry name" value="POLYNUCLEOTIDYL TRANSFERASE, RIBONUCLEASE H-LIKE SUPERFAMILY PROTEIN"/>
    <property type="match status" value="1"/>
</dbReference>
<dbReference type="Pfam" id="PF03652">
    <property type="entry name" value="RuvX"/>
    <property type="match status" value="1"/>
</dbReference>
<dbReference type="SMART" id="SM00732">
    <property type="entry name" value="YqgFc"/>
    <property type="match status" value="1"/>
</dbReference>
<dbReference type="SUPFAM" id="SSF53098">
    <property type="entry name" value="Ribonuclease H-like"/>
    <property type="match status" value="1"/>
</dbReference>
<accession>B7GSA0</accession>
<accession>E8ML11</accession>
<organism>
    <name type="scientific">Bifidobacterium longum subsp. infantis (strain ATCC 15697 / DSM 20088 / JCM 1222 / NCTC 11817 / S12)</name>
    <dbReference type="NCBI Taxonomy" id="391904"/>
    <lineage>
        <taxon>Bacteria</taxon>
        <taxon>Bacillati</taxon>
        <taxon>Actinomycetota</taxon>
        <taxon>Actinomycetes</taxon>
        <taxon>Bifidobacteriales</taxon>
        <taxon>Bifidobacteriaceae</taxon>
        <taxon>Bifidobacterium</taxon>
    </lineage>
</organism>
<sequence length="151" mass="16776">MVWLGVDLGNARVGLALSDPELTFAHPAGNIHVAGDYFFAIDEVLNVIEDEHVDHVIVGLPLQMDGTEGKSAKKARRWAANLEKRLQAESEDSDSTEYQIPQVSLIDERLTTVSAHRQLFEAHKASNKHRPVVDQQSAVVILQTALDRTRE</sequence>
<comment type="function">
    <text evidence="1">Could be a nuclease involved in processing of the 5'-end of pre-16S rRNA.</text>
</comment>
<comment type="subcellular location">
    <subcellularLocation>
        <location evidence="1">Cytoplasm</location>
    </subcellularLocation>
</comment>
<comment type="similarity">
    <text evidence="1">Belongs to the YqgF nuclease family.</text>
</comment>
<comment type="sequence caution" evidence="2">
    <conflict type="erroneous initiation">
        <sequence resource="EMBL-CDS" id="BAJ69238"/>
    </conflict>
    <text>Truncated N-terminus.</text>
</comment>
<protein>
    <recommendedName>
        <fullName evidence="1">Putative pre-16S rRNA nuclease</fullName>
        <ecNumber evidence="1">3.1.-.-</ecNumber>
    </recommendedName>
</protein>
<evidence type="ECO:0000255" key="1">
    <source>
        <dbReference type="HAMAP-Rule" id="MF_00651"/>
    </source>
</evidence>
<evidence type="ECO:0000305" key="2"/>